<comment type="catalytic activity">
    <reaction evidence="1">
        <text>L-aspartate + NH4(+) + ATP = L-asparagine + AMP + diphosphate + H(+)</text>
        <dbReference type="Rhea" id="RHEA:11372"/>
        <dbReference type="ChEBI" id="CHEBI:15378"/>
        <dbReference type="ChEBI" id="CHEBI:28938"/>
        <dbReference type="ChEBI" id="CHEBI:29991"/>
        <dbReference type="ChEBI" id="CHEBI:30616"/>
        <dbReference type="ChEBI" id="CHEBI:33019"/>
        <dbReference type="ChEBI" id="CHEBI:58048"/>
        <dbReference type="ChEBI" id="CHEBI:456215"/>
        <dbReference type="EC" id="6.3.1.1"/>
    </reaction>
</comment>
<comment type="pathway">
    <text evidence="1">Amino-acid biosynthesis; L-asparagine biosynthesis; L-asparagine from L-aspartate (ammonia route): step 1/1.</text>
</comment>
<comment type="subcellular location">
    <subcellularLocation>
        <location evidence="1">Cytoplasm</location>
    </subcellularLocation>
</comment>
<comment type="similarity">
    <text evidence="1">Belongs to the class-II aminoacyl-tRNA synthetase family. AsnA subfamily.</text>
</comment>
<proteinExistence type="inferred from homology"/>
<name>ASNA_HAEIG</name>
<feature type="chain" id="PRO_1000017948" description="Aspartate--ammonia ligase">
    <location>
        <begin position="1"/>
        <end position="330"/>
    </location>
</feature>
<sequence>MKKTFILQQQEISFVKNTFTQNLIEQLGIIEVQGPILSQVGNGMQDNLSGIEKAVQVNVKCIPNAVFEVVHSLAKWKRHTLARFNFKEDEGLFVHMKALRPDEDSLDSTHSVYVDQWDWEKVIPEGRRNFAYLKETVNSIYRAIRLTELAVEARFDIPSILPKQITFVHSEDLVKRYPDLSSKERENAICKEYGAVFLIGIGGKLSDGKPHDGRAPDYDDWTTESENGYKGLNGDILVWNDQLGKAFELSSMGIRVDESALRLQVGLTGDEDRLKMDWHQDLLNGKLPLTIGGGIGQSRLAMLLLRKKHIGEVQSSVWPKEMLEEFSNIL</sequence>
<reference key="1">
    <citation type="journal article" date="2007" name="Genome Biol.">
        <title>Characterization and modeling of the Haemophilus influenzae core and supragenomes based on the complete genomic sequences of Rd and 12 clinical nontypeable strains.</title>
        <authorList>
            <person name="Hogg J.S."/>
            <person name="Hu F.Z."/>
            <person name="Janto B."/>
            <person name="Boissy R."/>
            <person name="Hayes J."/>
            <person name="Keefe R."/>
            <person name="Post J.C."/>
            <person name="Ehrlich G.D."/>
        </authorList>
    </citation>
    <scope>NUCLEOTIDE SEQUENCE [LARGE SCALE GENOMIC DNA]</scope>
    <source>
        <strain>PittGG</strain>
    </source>
</reference>
<protein>
    <recommendedName>
        <fullName evidence="1">Aspartate--ammonia ligase</fullName>
        <ecNumber evidence="1">6.3.1.1</ecNumber>
    </recommendedName>
    <alternativeName>
        <fullName evidence="1">Asparagine synthetase A</fullName>
    </alternativeName>
</protein>
<dbReference type="EC" id="6.3.1.1" evidence="1"/>
<dbReference type="EMBL" id="CP000672">
    <property type="protein sequence ID" value="ABR00126.1"/>
    <property type="molecule type" value="Genomic_DNA"/>
</dbReference>
<dbReference type="SMR" id="A5UH70"/>
<dbReference type="KEGG" id="hiq:CGSHiGG_06095"/>
<dbReference type="HOGENOM" id="CLU_071543_0_0_6"/>
<dbReference type="UniPathway" id="UPA00134">
    <property type="reaction ID" value="UER00194"/>
</dbReference>
<dbReference type="Proteomes" id="UP000001990">
    <property type="component" value="Chromosome"/>
</dbReference>
<dbReference type="GO" id="GO:0005829">
    <property type="term" value="C:cytosol"/>
    <property type="evidence" value="ECO:0007669"/>
    <property type="project" value="TreeGrafter"/>
</dbReference>
<dbReference type="GO" id="GO:0004071">
    <property type="term" value="F:aspartate-ammonia ligase activity"/>
    <property type="evidence" value="ECO:0007669"/>
    <property type="project" value="UniProtKB-UniRule"/>
</dbReference>
<dbReference type="GO" id="GO:0005524">
    <property type="term" value="F:ATP binding"/>
    <property type="evidence" value="ECO:0007669"/>
    <property type="project" value="UniProtKB-UniRule"/>
</dbReference>
<dbReference type="GO" id="GO:0070981">
    <property type="term" value="P:L-asparagine biosynthetic process"/>
    <property type="evidence" value="ECO:0007669"/>
    <property type="project" value="UniProtKB-UniRule"/>
</dbReference>
<dbReference type="Gene3D" id="3.30.930.10">
    <property type="entry name" value="Bira Bifunctional Protein, Domain 2"/>
    <property type="match status" value="1"/>
</dbReference>
<dbReference type="HAMAP" id="MF_00555">
    <property type="entry name" value="AsnA"/>
    <property type="match status" value="1"/>
</dbReference>
<dbReference type="InterPro" id="IPR006195">
    <property type="entry name" value="aa-tRNA-synth_II"/>
</dbReference>
<dbReference type="InterPro" id="IPR045864">
    <property type="entry name" value="aa-tRNA-synth_II/BPL/LPL"/>
</dbReference>
<dbReference type="InterPro" id="IPR004618">
    <property type="entry name" value="AsnA"/>
</dbReference>
<dbReference type="NCBIfam" id="TIGR00669">
    <property type="entry name" value="asnA"/>
    <property type="match status" value="1"/>
</dbReference>
<dbReference type="PANTHER" id="PTHR30073">
    <property type="entry name" value="ASPARTATE--AMMONIA LIGASE"/>
    <property type="match status" value="1"/>
</dbReference>
<dbReference type="PANTHER" id="PTHR30073:SF5">
    <property type="entry name" value="ASPARTATE--AMMONIA LIGASE"/>
    <property type="match status" value="1"/>
</dbReference>
<dbReference type="Pfam" id="PF03590">
    <property type="entry name" value="AsnA"/>
    <property type="match status" value="1"/>
</dbReference>
<dbReference type="PIRSF" id="PIRSF001555">
    <property type="entry name" value="Asp_ammon_ligase"/>
    <property type="match status" value="1"/>
</dbReference>
<dbReference type="SUPFAM" id="SSF55681">
    <property type="entry name" value="Class II aaRS and biotin synthetases"/>
    <property type="match status" value="1"/>
</dbReference>
<dbReference type="PROSITE" id="PS50862">
    <property type="entry name" value="AA_TRNA_LIGASE_II"/>
    <property type="match status" value="1"/>
</dbReference>
<accession>A5UH70</accession>
<gene>
    <name evidence="1" type="primary">asnA</name>
    <name type="ordered locus">CGSHiGG_06095</name>
</gene>
<organism>
    <name type="scientific">Haemophilus influenzae (strain PittGG)</name>
    <dbReference type="NCBI Taxonomy" id="374931"/>
    <lineage>
        <taxon>Bacteria</taxon>
        <taxon>Pseudomonadati</taxon>
        <taxon>Pseudomonadota</taxon>
        <taxon>Gammaproteobacteria</taxon>
        <taxon>Pasteurellales</taxon>
        <taxon>Pasteurellaceae</taxon>
        <taxon>Haemophilus</taxon>
    </lineage>
</organism>
<keyword id="KW-0028">Amino-acid biosynthesis</keyword>
<keyword id="KW-0061">Asparagine biosynthesis</keyword>
<keyword id="KW-0067">ATP-binding</keyword>
<keyword id="KW-0963">Cytoplasm</keyword>
<keyword id="KW-0436">Ligase</keyword>
<keyword id="KW-0547">Nucleotide-binding</keyword>
<evidence type="ECO:0000255" key="1">
    <source>
        <dbReference type="HAMAP-Rule" id="MF_00555"/>
    </source>
</evidence>